<keyword id="KW-1003">Cell membrane</keyword>
<keyword id="KW-0472">Membrane</keyword>
<keyword id="KW-1185">Reference proteome</keyword>
<keyword id="KW-0812">Transmembrane</keyword>
<keyword id="KW-1133">Transmembrane helix</keyword>
<dbReference type="EMBL" id="L77117">
    <property type="protein sequence ID" value="AAB99404.1"/>
    <property type="molecule type" value="Genomic_DNA"/>
</dbReference>
<dbReference type="PIR" id="A64474">
    <property type="entry name" value="A64474"/>
</dbReference>
<dbReference type="SMR" id="Q58789"/>
<dbReference type="FunCoup" id="Q58789">
    <property type="interactions" value="1"/>
</dbReference>
<dbReference type="STRING" id="243232.MJ_1394"/>
<dbReference type="PaxDb" id="243232-MJ_1394"/>
<dbReference type="EnsemblBacteria" id="AAB99404">
    <property type="protein sequence ID" value="AAB99404"/>
    <property type="gene ID" value="MJ_1394"/>
</dbReference>
<dbReference type="KEGG" id="mja:MJ_1394"/>
<dbReference type="eggNOG" id="arCOG06147">
    <property type="taxonomic scope" value="Archaea"/>
</dbReference>
<dbReference type="HOGENOM" id="CLU_303592_0_0_2"/>
<dbReference type="InParanoid" id="Q58789"/>
<dbReference type="Proteomes" id="UP000000805">
    <property type="component" value="Chromosome"/>
</dbReference>
<dbReference type="GO" id="GO:0005886">
    <property type="term" value="C:plasma membrane"/>
    <property type="evidence" value="ECO:0007669"/>
    <property type="project" value="UniProtKB-SubCell"/>
</dbReference>
<evidence type="ECO:0000255" key="1"/>
<evidence type="ECO:0000305" key="2"/>
<comment type="subcellular location">
    <subcellularLocation>
        <location evidence="2">Cell membrane</location>
        <topology evidence="2">Multi-pass membrane protein</topology>
    </subcellularLocation>
</comment>
<comment type="similarity">
    <text evidence="2">To M.jannaschii MJ1393 and A.fulgidus AF2028.</text>
</comment>
<name>Y1394_METJA</name>
<proteinExistence type="predicted"/>
<feature type="chain" id="PRO_0000107308" description="Uncharacterized protein MJ1394">
    <location>
        <begin position="1"/>
        <end position="987"/>
    </location>
</feature>
<feature type="transmembrane region" description="Helical" evidence="1">
    <location>
        <begin position="12"/>
        <end position="32"/>
    </location>
</feature>
<feature type="transmembrane region" description="Helical" evidence="1">
    <location>
        <begin position="958"/>
        <end position="978"/>
    </location>
</feature>
<organism>
    <name type="scientific">Methanocaldococcus jannaschii (strain ATCC 43067 / DSM 2661 / JAL-1 / JCM 10045 / NBRC 100440)</name>
    <name type="common">Methanococcus jannaschii</name>
    <dbReference type="NCBI Taxonomy" id="243232"/>
    <lineage>
        <taxon>Archaea</taxon>
        <taxon>Methanobacteriati</taxon>
        <taxon>Methanobacteriota</taxon>
        <taxon>Methanomada group</taxon>
        <taxon>Methanococci</taxon>
        <taxon>Methanococcales</taxon>
        <taxon>Methanocaldococcaceae</taxon>
        <taxon>Methanocaldococcus</taxon>
    </lineage>
</organism>
<reference key="1">
    <citation type="journal article" date="1996" name="Science">
        <title>Complete genome sequence of the methanogenic archaeon, Methanococcus jannaschii.</title>
        <authorList>
            <person name="Bult C.J."/>
            <person name="White O."/>
            <person name="Olsen G.J."/>
            <person name="Zhou L."/>
            <person name="Fleischmann R.D."/>
            <person name="Sutton G.G."/>
            <person name="Blake J.A."/>
            <person name="FitzGerald L.M."/>
            <person name="Clayton R.A."/>
            <person name="Gocayne J.D."/>
            <person name="Kerlavage A.R."/>
            <person name="Dougherty B.A."/>
            <person name="Tomb J.-F."/>
            <person name="Adams M.D."/>
            <person name="Reich C.I."/>
            <person name="Overbeek R."/>
            <person name="Kirkness E.F."/>
            <person name="Weinstock K.G."/>
            <person name="Merrick J.M."/>
            <person name="Glodek A."/>
            <person name="Scott J.L."/>
            <person name="Geoghagen N.S.M."/>
            <person name="Weidman J.F."/>
            <person name="Fuhrmann J.L."/>
            <person name="Nguyen D."/>
            <person name="Utterback T.R."/>
            <person name="Kelley J.M."/>
            <person name="Peterson J.D."/>
            <person name="Sadow P.W."/>
            <person name="Hanna M.C."/>
            <person name="Cotton M.D."/>
            <person name="Roberts K.M."/>
            <person name="Hurst M.A."/>
            <person name="Kaine B.P."/>
            <person name="Borodovsky M."/>
            <person name="Klenk H.-P."/>
            <person name="Fraser C.M."/>
            <person name="Smith H.O."/>
            <person name="Woese C.R."/>
            <person name="Venter J.C."/>
        </authorList>
    </citation>
    <scope>NUCLEOTIDE SEQUENCE [LARGE SCALE GENOMIC DNA]</scope>
    <source>
        <strain>ATCC 43067 / DSM 2661 / JAL-1 / JCM 10045 / NBRC 100440</strain>
    </source>
</reference>
<gene>
    <name type="ordered locus">MJ1394</name>
</gene>
<protein>
    <recommendedName>
        <fullName>Uncharacterized protein MJ1394</fullName>
    </recommendedName>
</protein>
<accession>Q58789</accession>
<sequence length="987" mass="112360">MMWGMPNIKLKFIYLCILLFVFMASMLNSVSGLKTIFYDDFENWSGWYNYSSGAVEQSSNYAHSGIYSLRKFLNDDPNGGYKLIGKEIGRDIVMEGWIYRPLPYVSGRWDRIGIEDENFNGYSIRIEHDYNKIAIETRENGIAVNTLVITNWNPPENQWYYFKFYIYSNGTLRLEVYYENGSLGATVSAIDNIYTKFDRVVVHGGQDYYVDDLRISDLYPPLRVRYIEEYNATATVDGTGKTNYSYGLTGHIIIENTAPYKEDTLNDVWVAVDIKNNASGLRLVYNGTPKGVFIESSAPAYTNLPNANTYIHIPILPNNSYVEYEFDIDASQTLPILVNETYDVTKIPANKMSEWTVNLIVYLNKNLVPNGENVNVNVIKYLSNGQFYDNFENWTGWNQYKNGIVQWSSIQSHSGNYSLEKYGISTSLNNDPNGGYKLLPKEIGRDVVISGWVYRPSNWGGGPIDRIGLEDENFDGYSFEVNHYSNYISIDRRTNGNPTEISPEVYWNPPEDEWYYFELKIYSNGTITFSTYYQNGSLAATVSTIDNTYTKFDRVVIHGGYVYYVDDLEVNSKNFDFYGDKNWKYLEITSANSSEGTAVLFDGDYFKKDYNTSNLNAINWTNITLNWSNDSATLVFNVLGNYSYSERDNILAKYGFAKILFNYNGTNTNTSIKGVYASGSYSISTDHGTTGEINIWIENVTFKNDAKSYSFNLTNLNIWAVNKSAYELYWNPFNKSIWIDGSNYTITPNIDIPPGEVWNSKTYNFTFSGVPIVWANCSFTLSKKDYILLNEVSQIGSSYVVVEEIYVVGSYLIKVTKHIVPDADGTYDIYIVVENIGSVKTPEYVYVYDLIPKNFTVSDEWVNQSSMLIAEGNHTITTNPRYNLSMWWALHAIYPGADGDGNWNDTAEILANKTVVIHYKLNGTGEFYPSDAFIVGIDPTNSLLPTTSPKITTVAGTVENNFEIFLILINVIFGLGILTKRNIRNNK</sequence>